<proteinExistence type="inferred from homology"/>
<dbReference type="EMBL" id="AP009351">
    <property type="protein sequence ID" value="BAF68290.1"/>
    <property type="molecule type" value="Genomic_DNA"/>
</dbReference>
<dbReference type="RefSeq" id="WP_000654185.1">
    <property type="nucleotide sequence ID" value="NZ_JBBIAE010000008.1"/>
</dbReference>
<dbReference type="SMR" id="A6QIV8"/>
<dbReference type="KEGG" id="sae:NWMN_2018"/>
<dbReference type="HOGENOM" id="CLU_106658_0_0_9"/>
<dbReference type="Proteomes" id="UP000006386">
    <property type="component" value="Chromosome"/>
</dbReference>
<dbReference type="Gene3D" id="3.40.50.10360">
    <property type="entry name" value="Hypothetical protein TT1679"/>
    <property type="match status" value="1"/>
</dbReference>
<dbReference type="HAMAP" id="MF_00800">
    <property type="entry name" value="UPF0340"/>
    <property type="match status" value="1"/>
</dbReference>
<dbReference type="InterPro" id="IPR028345">
    <property type="entry name" value="Antibiotic_NAT-like"/>
</dbReference>
<dbReference type="InterPro" id="IPR006340">
    <property type="entry name" value="DUF436"/>
</dbReference>
<dbReference type="NCBIfam" id="TIGR01440">
    <property type="entry name" value="TIGR01440 family protein"/>
    <property type="match status" value="1"/>
</dbReference>
<dbReference type="Pfam" id="PF04260">
    <property type="entry name" value="DUF436"/>
    <property type="match status" value="1"/>
</dbReference>
<dbReference type="PIRSF" id="PIRSF007510">
    <property type="entry name" value="UCP007510"/>
    <property type="match status" value="1"/>
</dbReference>
<dbReference type="SUPFAM" id="SSF110710">
    <property type="entry name" value="TTHA0583/YokD-like"/>
    <property type="match status" value="1"/>
</dbReference>
<evidence type="ECO:0000255" key="1">
    <source>
        <dbReference type="HAMAP-Rule" id="MF_00800"/>
    </source>
</evidence>
<accession>A6QIV8</accession>
<feature type="chain" id="PRO_1000072844" description="UPF0340 protein NWMN_2018">
    <location>
        <begin position="1"/>
        <end position="174"/>
    </location>
</feature>
<gene>
    <name type="ordered locus">NWMN_2018</name>
</gene>
<sequence>MKDLTMLLDELKDMSFFNKGDICLIGCSTSEVIGEKIGTVGSMEVAETIFNALDVVSKETGVTFAFQGCEHINRAITIEKSQYNPLTMEEVSVVPDVHAGGSLATYAFQHMKDPIVVEHITVPCGIDIGQTLIGMHIKHVCVPVRTSVKQVGQAIVTIATSRPKKIGGERAKYQ</sequence>
<reference key="1">
    <citation type="journal article" date="2008" name="J. Bacteriol.">
        <title>Genome sequence of Staphylococcus aureus strain Newman and comparative analysis of staphylococcal genomes: polymorphism and evolution of two major pathogenicity islands.</title>
        <authorList>
            <person name="Baba T."/>
            <person name="Bae T."/>
            <person name="Schneewind O."/>
            <person name="Takeuchi F."/>
            <person name="Hiramatsu K."/>
        </authorList>
    </citation>
    <scope>NUCLEOTIDE SEQUENCE [LARGE SCALE GENOMIC DNA]</scope>
    <source>
        <strain>Newman</strain>
    </source>
</reference>
<organism>
    <name type="scientific">Staphylococcus aureus (strain Newman)</name>
    <dbReference type="NCBI Taxonomy" id="426430"/>
    <lineage>
        <taxon>Bacteria</taxon>
        <taxon>Bacillati</taxon>
        <taxon>Bacillota</taxon>
        <taxon>Bacilli</taxon>
        <taxon>Bacillales</taxon>
        <taxon>Staphylococcaceae</taxon>
        <taxon>Staphylococcus</taxon>
    </lineage>
</organism>
<name>Y2018_STAAE</name>
<protein>
    <recommendedName>
        <fullName evidence="1">UPF0340 protein NWMN_2018</fullName>
    </recommendedName>
</protein>
<comment type="similarity">
    <text evidence="1">Belongs to the UPF0340 family.</text>
</comment>